<gene>
    <name evidence="1" type="primary">plsX</name>
    <name type="ordered locus">SeHA_C1306</name>
</gene>
<evidence type="ECO:0000255" key="1">
    <source>
        <dbReference type="HAMAP-Rule" id="MF_00019"/>
    </source>
</evidence>
<keyword id="KW-0963">Cytoplasm</keyword>
<keyword id="KW-0444">Lipid biosynthesis</keyword>
<keyword id="KW-0443">Lipid metabolism</keyword>
<keyword id="KW-0594">Phospholipid biosynthesis</keyword>
<keyword id="KW-1208">Phospholipid metabolism</keyword>
<keyword id="KW-0808">Transferase</keyword>
<organism>
    <name type="scientific">Salmonella heidelberg (strain SL476)</name>
    <dbReference type="NCBI Taxonomy" id="454169"/>
    <lineage>
        <taxon>Bacteria</taxon>
        <taxon>Pseudomonadati</taxon>
        <taxon>Pseudomonadota</taxon>
        <taxon>Gammaproteobacteria</taxon>
        <taxon>Enterobacterales</taxon>
        <taxon>Enterobacteriaceae</taxon>
        <taxon>Salmonella</taxon>
    </lineage>
</organism>
<name>PLSX_SALHS</name>
<reference key="1">
    <citation type="journal article" date="2011" name="J. Bacteriol.">
        <title>Comparative genomics of 28 Salmonella enterica isolates: evidence for CRISPR-mediated adaptive sublineage evolution.</title>
        <authorList>
            <person name="Fricke W.F."/>
            <person name="Mammel M.K."/>
            <person name="McDermott P.F."/>
            <person name="Tartera C."/>
            <person name="White D.G."/>
            <person name="Leclerc J.E."/>
            <person name="Ravel J."/>
            <person name="Cebula T.A."/>
        </authorList>
    </citation>
    <scope>NUCLEOTIDE SEQUENCE [LARGE SCALE GENOMIC DNA]</scope>
    <source>
        <strain>SL476</strain>
    </source>
</reference>
<accession>B4TFG7</accession>
<comment type="function">
    <text evidence="1">Catalyzes the reversible formation of acyl-phosphate (acyl-PO(4)) from acyl-[acyl-carrier-protein] (acyl-ACP). This enzyme utilizes acyl-ACP as fatty acyl donor, but not acyl-CoA.</text>
</comment>
<comment type="catalytic activity">
    <reaction evidence="1">
        <text>a fatty acyl-[ACP] + phosphate = an acyl phosphate + holo-[ACP]</text>
        <dbReference type="Rhea" id="RHEA:42292"/>
        <dbReference type="Rhea" id="RHEA-COMP:9685"/>
        <dbReference type="Rhea" id="RHEA-COMP:14125"/>
        <dbReference type="ChEBI" id="CHEBI:43474"/>
        <dbReference type="ChEBI" id="CHEBI:59918"/>
        <dbReference type="ChEBI" id="CHEBI:64479"/>
        <dbReference type="ChEBI" id="CHEBI:138651"/>
        <dbReference type="EC" id="2.3.1.274"/>
    </reaction>
</comment>
<comment type="pathway">
    <text evidence="1">Lipid metabolism; phospholipid metabolism.</text>
</comment>
<comment type="subunit">
    <text evidence="1">Homodimer. Probably interacts with PlsY.</text>
</comment>
<comment type="subcellular location">
    <subcellularLocation>
        <location evidence="1">Cytoplasm</location>
    </subcellularLocation>
    <text evidence="1">Associated with the membrane possibly through PlsY.</text>
</comment>
<comment type="similarity">
    <text evidence="1">Belongs to the PlsX family.</text>
</comment>
<protein>
    <recommendedName>
        <fullName evidence="1">Phosphate acyltransferase</fullName>
        <ecNumber evidence="1">2.3.1.274</ecNumber>
    </recommendedName>
    <alternativeName>
        <fullName evidence="1">Acyl-ACP phosphotransacylase</fullName>
    </alternativeName>
    <alternativeName>
        <fullName evidence="1">Acyl-[acyl-carrier-protein]--phosphate acyltransferase</fullName>
    </alternativeName>
    <alternativeName>
        <fullName evidence="1">Phosphate-acyl-ACP acyltransferase</fullName>
    </alternativeName>
</protein>
<sequence>MTRLTLALDVMGGDFGPSVTVPAALQALNANSQLTLLLVGNPDIITPLLAKADFEQRSRLQIIPAQSVVASDARPSQAIRASRGTSMRVALELVKEGRAEACVSAGNTGALMGLAKLLLKPLEGIERPALVTVLPHQQKGKTVVLDLGANVDCDSTMLVQFAVMGAVLAEEVVGIKNPRVALLNIGEEETKGLDSIREASLMLKTVPTINYIGYLEANELLTGKTDVLVCDGFTGNVTLKTMEGVVRMFLSLLKSQGEGKKRSWWLLLLKRWLQKSLTRRFSHLNPDQYNGACLLGLRGTVIKSHGAANQRAFAVAIEQAVQAVQRQVPQRIAARLESVYPAGFEPLDDGKGVNLRAHR</sequence>
<feature type="chain" id="PRO_1000089935" description="Phosphate acyltransferase">
    <location>
        <begin position="1"/>
        <end position="359"/>
    </location>
</feature>
<dbReference type="EC" id="2.3.1.274" evidence="1"/>
<dbReference type="EMBL" id="CP001120">
    <property type="protein sequence ID" value="ACF70283.1"/>
    <property type="molecule type" value="Genomic_DNA"/>
</dbReference>
<dbReference type="RefSeq" id="WP_001532250.1">
    <property type="nucleotide sequence ID" value="NC_011083.1"/>
</dbReference>
<dbReference type="SMR" id="B4TFG7"/>
<dbReference type="KEGG" id="seh:SeHA_C1306"/>
<dbReference type="HOGENOM" id="CLU_039379_1_0_6"/>
<dbReference type="UniPathway" id="UPA00085"/>
<dbReference type="Proteomes" id="UP000001866">
    <property type="component" value="Chromosome"/>
</dbReference>
<dbReference type="GO" id="GO:0005737">
    <property type="term" value="C:cytoplasm"/>
    <property type="evidence" value="ECO:0007669"/>
    <property type="project" value="UniProtKB-SubCell"/>
</dbReference>
<dbReference type="GO" id="GO:0043811">
    <property type="term" value="F:phosphate:acyl-[acyl carrier protein] acyltransferase activity"/>
    <property type="evidence" value="ECO:0007669"/>
    <property type="project" value="UniProtKB-UniRule"/>
</dbReference>
<dbReference type="GO" id="GO:0006633">
    <property type="term" value="P:fatty acid biosynthetic process"/>
    <property type="evidence" value="ECO:0007669"/>
    <property type="project" value="UniProtKB-UniRule"/>
</dbReference>
<dbReference type="GO" id="GO:0008654">
    <property type="term" value="P:phospholipid biosynthetic process"/>
    <property type="evidence" value="ECO:0007669"/>
    <property type="project" value="UniProtKB-KW"/>
</dbReference>
<dbReference type="FunFam" id="3.40.718.10:FF:000008">
    <property type="entry name" value="Phosphate acyltransferase"/>
    <property type="match status" value="1"/>
</dbReference>
<dbReference type="Gene3D" id="3.40.718.10">
    <property type="entry name" value="Isopropylmalate Dehydrogenase"/>
    <property type="match status" value="1"/>
</dbReference>
<dbReference type="HAMAP" id="MF_00019">
    <property type="entry name" value="PlsX"/>
    <property type="match status" value="1"/>
</dbReference>
<dbReference type="InterPro" id="IPR003664">
    <property type="entry name" value="FA_synthesis"/>
</dbReference>
<dbReference type="InterPro" id="IPR012281">
    <property type="entry name" value="Phospholipid_synth_PlsX-like"/>
</dbReference>
<dbReference type="NCBIfam" id="TIGR00182">
    <property type="entry name" value="plsX"/>
    <property type="match status" value="1"/>
</dbReference>
<dbReference type="PANTHER" id="PTHR30100">
    <property type="entry name" value="FATTY ACID/PHOSPHOLIPID SYNTHESIS PROTEIN PLSX"/>
    <property type="match status" value="1"/>
</dbReference>
<dbReference type="PANTHER" id="PTHR30100:SF1">
    <property type="entry name" value="PHOSPHATE ACYLTRANSFERASE"/>
    <property type="match status" value="1"/>
</dbReference>
<dbReference type="Pfam" id="PF02504">
    <property type="entry name" value="FA_synthesis"/>
    <property type="match status" value="1"/>
</dbReference>
<dbReference type="PIRSF" id="PIRSF002465">
    <property type="entry name" value="Phsphlp_syn_PlsX"/>
    <property type="match status" value="1"/>
</dbReference>
<dbReference type="SUPFAM" id="SSF53659">
    <property type="entry name" value="Isocitrate/Isopropylmalate dehydrogenase-like"/>
    <property type="match status" value="1"/>
</dbReference>
<proteinExistence type="inferred from homology"/>